<evidence type="ECO:0000250" key="1">
    <source>
        <dbReference type="UniProtKB" id="Q00802"/>
    </source>
</evidence>
<evidence type="ECO:0000255" key="2"/>
<evidence type="ECO:0000303" key="3">
    <source>
    </source>
</evidence>
<evidence type="ECO:0000305" key="4"/>
<reference key="1">
    <citation type="journal article" date="1988" name="Biochim. Biophys. Acta">
        <title>Structures and expression of mRNAs coding for major plasma proteins of Bombyx mori.</title>
        <authorList>
            <person name="Sakai N."/>
            <person name="Mori S."/>
            <person name="Izumi S."/>
            <person name="Haino-Fukushima K."/>
            <person name="Ogura T."/>
            <person name="Maekawa H."/>
            <person name="Tomino S."/>
        </authorList>
    </citation>
    <scope>NUCLEOTIDE SEQUENCE [MRNA]</scope>
    <source>
        <strain>Tokai X Asahi</strain>
        <tissue>Fat body</tissue>
    </source>
</reference>
<organism>
    <name type="scientific">Bombyx mori</name>
    <name type="common">Silk moth</name>
    <dbReference type="NCBI Taxonomy" id="7091"/>
    <lineage>
        <taxon>Eukaryota</taxon>
        <taxon>Metazoa</taxon>
        <taxon>Ecdysozoa</taxon>
        <taxon>Arthropoda</taxon>
        <taxon>Hexapoda</taxon>
        <taxon>Insecta</taxon>
        <taxon>Pterygota</taxon>
        <taxon>Neoptera</taxon>
        <taxon>Endopterygota</taxon>
        <taxon>Lepidoptera</taxon>
        <taxon>Glossata</taxon>
        <taxon>Ditrysia</taxon>
        <taxon>Bombycoidea</taxon>
        <taxon>Bombycidae</taxon>
        <taxon>Bombycinae</taxon>
        <taxon>Bombyx</taxon>
    </lineage>
</organism>
<name>LPPB6_BOMMO</name>
<sequence>MRLTLFAFVLAVCALASNATLAPRTDDVLAEQLYMSVVIGEYETAIAKCSEYLKEKKGEVIKEAVKRLIENGKRNTMDFAYQLWTKDGKEIVKSYFPIQFRVIFTEQTVKLINKRDHHALKLIDQQNHNKIAFGDSKDKTSKKVSWKFTPVLENNRVYFKIMSTEDKQYLKLDNTKGSSDDRIIYGDSTADTFKHHWYLEPSMYESDVMFFVYNREYNSVMTLDEDMAANEDREALGHSGEVSGYPQLFAWYIVPY</sequence>
<feature type="signal peptide" evidence="2">
    <location>
        <begin position="1"/>
        <end position="19"/>
    </location>
</feature>
<feature type="chain" id="PRO_0000021600" description="Low molecular mass lipoprotein PBMHP-6">
    <location>
        <begin position="20"/>
        <end position="256"/>
    </location>
</feature>
<comment type="subcellular location">
    <subcellularLocation>
        <location evidence="1">Secreted</location>
    </subcellularLocation>
</comment>
<comment type="miscellaneous">
    <text evidence="4">This lipoprotein belongs to the group of structurally related '30 kDa proteins' that comprise major protein components of the fifth (and last) instar larvae and of pupae.</text>
</comment>
<comment type="similarity">
    <text evidence="4">Belongs to the 30 kDa lipoprotein family.</text>
</comment>
<accession>P09334</accession>
<keyword id="KW-0449">Lipoprotein</keyword>
<keyword id="KW-1185">Reference proteome</keyword>
<keyword id="KW-0964">Secreted</keyword>
<keyword id="KW-0732">Signal</keyword>
<protein>
    <recommendedName>
        <fullName evidence="3">Low molecular mass lipoprotein PBMHP-6</fullName>
    </recommendedName>
</protein>
<proteinExistence type="evidence at transcript level"/>
<dbReference type="EMBL" id="X07552">
    <property type="protein sequence ID" value="CAA30432.1"/>
    <property type="molecule type" value="mRNA"/>
</dbReference>
<dbReference type="PIR" id="S01045">
    <property type="entry name" value="S01045"/>
</dbReference>
<dbReference type="RefSeq" id="NP_001037486.1">
    <property type="nucleotide sequence ID" value="NM_001044021.1"/>
</dbReference>
<dbReference type="RefSeq" id="XP_012550470.1">
    <property type="nucleotide sequence ID" value="XM_012695016.1"/>
</dbReference>
<dbReference type="SMR" id="P09334"/>
<dbReference type="STRING" id="7091.P09334"/>
<dbReference type="PaxDb" id="7091-BGIBMGA004394-TA"/>
<dbReference type="EnsemblMetazoa" id="NM_001044021.2">
    <property type="protein sequence ID" value="NP_001037486.1"/>
    <property type="gene ID" value="GeneID_693042"/>
</dbReference>
<dbReference type="GeneID" id="693042"/>
<dbReference type="KEGG" id="bmor:693042"/>
<dbReference type="CTD" id="693042"/>
<dbReference type="HOGENOM" id="CLU_053201_2_0_1"/>
<dbReference type="InParanoid" id="P09334"/>
<dbReference type="Proteomes" id="UP000005204">
    <property type="component" value="Unassembled WGS sequence"/>
</dbReference>
<dbReference type="GO" id="GO:0005576">
    <property type="term" value="C:extracellular region"/>
    <property type="evidence" value="ECO:0007669"/>
    <property type="project" value="UniProtKB-SubCell"/>
</dbReference>
<dbReference type="Gene3D" id="2.80.10.50">
    <property type="match status" value="1"/>
</dbReference>
<dbReference type="Gene3D" id="1.10.10.2400">
    <property type="entry name" value="Lepidopteran low molecular weight (30 kD) lipoprotein, N-terminal domain"/>
    <property type="match status" value="1"/>
</dbReference>
<dbReference type="InterPro" id="IPR004943">
    <property type="entry name" value="Lipoprotein_11"/>
</dbReference>
<dbReference type="InterPro" id="IPR042046">
    <property type="entry name" value="Lipoprotein_11_N"/>
</dbReference>
<dbReference type="Pfam" id="PF03260">
    <property type="entry name" value="Lipoprotein_11"/>
    <property type="match status" value="1"/>
</dbReference>